<keyword id="KW-0067">ATP-binding</keyword>
<keyword id="KW-0173">Coenzyme A biosynthesis</keyword>
<keyword id="KW-0963">Cytoplasm</keyword>
<keyword id="KW-0418">Kinase</keyword>
<keyword id="KW-0547">Nucleotide-binding</keyword>
<keyword id="KW-0808">Transferase</keyword>
<protein>
    <recommendedName>
        <fullName evidence="1">Pantothenate kinase</fullName>
        <ecNumber evidence="1">2.7.1.33</ecNumber>
    </recommendedName>
    <alternativeName>
        <fullName evidence="1">Pantothenic acid kinase</fullName>
    </alternativeName>
</protein>
<feature type="chain" id="PRO_0000194443" description="Pantothenate kinase">
    <location>
        <begin position="1"/>
        <end position="319"/>
    </location>
</feature>
<feature type="binding site" evidence="1">
    <location>
        <begin position="97"/>
        <end position="104"/>
    </location>
    <ligand>
        <name>ATP</name>
        <dbReference type="ChEBI" id="CHEBI:30616"/>
    </ligand>
</feature>
<reference key="1">
    <citation type="journal article" date="2000" name="DNA Res.">
        <title>Complete genome structure of the nitrogen-fixing symbiotic bacterium Mesorhizobium loti.</title>
        <authorList>
            <person name="Kaneko T."/>
            <person name="Nakamura Y."/>
            <person name="Sato S."/>
            <person name="Asamizu E."/>
            <person name="Kato T."/>
            <person name="Sasamoto S."/>
            <person name="Watanabe A."/>
            <person name="Idesawa K."/>
            <person name="Ishikawa A."/>
            <person name="Kawashima K."/>
            <person name="Kimura T."/>
            <person name="Kishida Y."/>
            <person name="Kiyokawa C."/>
            <person name="Kohara M."/>
            <person name="Matsumoto M."/>
            <person name="Matsuno A."/>
            <person name="Mochizuki Y."/>
            <person name="Nakayama S."/>
            <person name="Nakazaki N."/>
            <person name="Shimpo S."/>
            <person name="Sugimoto M."/>
            <person name="Takeuchi C."/>
            <person name="Yamada M."/>
            <person name="Tabata S."/>
        </authorList>
    </citation>
    <scope>NUCLEOTIDE SEQUENCE [LARGE SCALE GENOMIC DNA]</scope>
    <source>
        <strain>LMG 29417 / CECT 9101 / MAFF 303099</strain>
    </source>
</reference>
<proteinExistence type="inferred from homology"/>
<accession>Q98CS9</accession>
<comment type="catalytic activity">
    <reaction evidence="1">
        <text>(R)-pantothenate + ATP = (R)-4'-phosphopantothenate + ADP + H(+)</text>
        <dbReference type="Rhea" id="RHEA:16373"/>
        <dbReference type="ChEBI" id="CHEBI:10986"/>
        <dbReference type="ChEBI" id="CHEBI:15378"/>
        <dbReference type="ChEBI" id="CHEBI:29032"/>
        <dbReference type="ChEBI" id="CHEBI:30616"/>
        <dbReference type="ChEBI" id="CHEBI:456216"/>
        <dbReference type="EC" id="2.7.1.33"/>
    </reaction>
</comment>
<comment type="pathway">
    <text evidence="1">Cofactor biosynthesis; coenzyme A biosynthesis; CoA from (R)-pantothenate: step 1/5.</text>
</comment>
<comment type="subcellular location">
    <subcellularLocation>
        <location evidence="1">Cytoplasm</location>
    </subcellularLocation>
</comment>
<comment type="similarity">
    <text evidence="1">Belongs to the prokaryotic pantothenate kinase family.</text>
</comment>
<evidence type="ECO:0000255" key="1">
    <source>
        <dbReference type="HAMAP-Rule" id="MF_00215"/>
    </source>
</evidence>
<name>COAA_RHILO</name>
<sequence>MDQLAQTEKYSPFRFFSAEQWSRFRADTPLTLSEDEFRRLRSLNDPVDLEEVKRIYLSLSRLLSAHVEASQLLFRQRQAFFNAVDIVKTPFIIGIAGSVAVGKSTTARVLKELLARWPSSPKVDLITTDGFLLPNEVLRRENLMERKGFPDSYDVGALLRFLSGIKSALPDVRAPVYSHLTYDVIPGEFVTIDRPDILIFEGINVLQPGKLPQDGKIVPFLSDFFDFAIYIDADEKLIHEWYISRFMRLRETAFRNPDSFFHRYSQLSEEAARAIAEGLWSNINLKNLRENILPTRARADLILRKGADHLVEEVALRKL</sequence>
<organism>
    <name type="scientific">Mesorhizobium japonicum (strain LMG 29417 / CECT 9101 / MAFF 303099)</name>
    <name type="common">Mesorhizobium loti (strain MAFF 303099)</name>
    <dbReference type="NCBI Taxonomy" id="266835"/>
    <lineage>
        <taxon>Bacteria</taxon>
        <taxon>Pseudomonadati</taxon>
        <taxon>Pseudomonadota</taxon>
        <taxon>Alphaproteobacteria</taxon>
        <taxon>Hyphomicrobiales</taxon>
        <taxon>Phyllobacteriaceae</taxon>
        <taxon>Mesorhizobium</taxon>
    </lineage>
</organism>
<dbReference type="EC" id="2.7.1.33" evidence="1"/>
<dbReference type="EMBL" id="BA000012">
    <property type="protein sequence ID" value="BAB51542.1"/>
    <property type="molecule type" value="Genomic_DNA"/>
</dbReference>
<dbReference type="RefSeq" id="WP_010912883.1">
    <property type="nucleotide sequence ID" value="NC_002678.2"/>
</dbReference>
<dbReference type="SMR" id="Q98CS9"/>
<dbReference type="GeneID" id="66680755"/>
<dbReference type="KEGG" id="mlo:mlr5019"/>
<dbReference type="eggNOG" id="COG1072">
    <property type="taxonomic scope" value="Bacteria"/>
</dbReference>
<dbReference type="HOGENOM" id="CLU_053818_1_1_5"/>
<dbReference type="UniPathway" id="UPA00241">
    <property type="reaction ID" value="UER00352"/>
</dbReference>
<dbReference type="Proteomes" id="UP000000552">
    <property type="component" value="Chromosome"/>
</dbReference>
<dbReference type="GO" id="GO:0005737">
    <property type="term" value="C:cytoplasm"/>
    <property type="evidence" value="ECO:0007669"/>
    <property type="project" value="UniProtKB-SubCell"/>
</dbReference>
<dbReference type="GO" id="GO:0005524">
    <property type="term" value="F:ATP binding"/>
    <property type="evidence" value="ECO:0007669"/>
    <property type="project" value="UniProtKB-UniRule"/>
</dbReference>
<dbReference type="GO" id="GO:0004594">
    <property type="term" value="F:pantothenate kinase activity"/>
    <property type="evidence" value="ECO:0007669"/>
    <property type="project" value="UniProtKB-UniRule"/>
</dbReference>
<dbReference type="GO" id="GO:0015937">
    <property type="term" value="P:coenzyme A biosynthetic process"/>
    <property type="evidence" value="ECO:0007669"/>
    <property type="project" value="UniProtKB-UniRule"/>
</dbReference>
<dbReference type="CDD" id="cd02025">
    <property type="entry name" value="PanK"/>
    <property type="match status" value="1"/>
</dbReference>
<dbReference type="Gene3D" id="3.40.50.300">
    <property type="entry name" value="P-loop containing nucleotide triphosphate hydrolases"/>
    <property type="match status" value="1"/>
</dbReference>
<dbReference type="HAMAP" id="MF_00215">
    <property type="entry name" value="Pantothen_kinase_1"/>
    <property type="match status" value="1"/>
</dbReference>
<dbReference type="InterPro" id="IPR027417">
    <property type="entry name" value="P-loop_NTPase"/>
</dbReference>
<dbReference type="InterPro" id="IPR004566">
    <property type="entry name" value="PanK"/>
</dbReference>
<dbReference type="InterPro" id="IPR006083">
    <property type="entry name" value="PRK/URK"/>
</dbReference>
<dbReference type="NCBIfam" id="TIGR00554">
    <property type="entry name" value="panK_bact"/>
    <property type="match status" value="1"/>
</dbReference>
<dbReference type="PANTHER" id="PTHR10285">
    <property type="entry name" value="URIDINE KINASE"/>
    <property type="match status" value="1"/>
</dbReference>
<dbReference type="Pfam" id="PF00485">
    <property type="entry name" value="PRK"/>
    <property type="match status" value="1"/>
</dbReference>
<dbReference type="PIRSF" id="PIRSF000545">
    <property type="entry name" value="Pantothenate_kin"/>
    <property type="match status" value="1"/>
</dbReference>
<dbReference type="SUPFAM" id="SSF52540">
    <property type="entry name" value="P-loop containing nucleoside triphosphate hydrolases"/>
    <property type="match status" value="1"/>
</dbReference>
<gene>
    <name evidence="1" type="primary">coaA</name>
    <name type="ordered locus">mlr5019</name>
</gene>